<keyword id="KW-0687">Ribonucleoprotein</keyword>
<keyword id="KW-0689">Ribosomal protein</keyword>
<keyword id="KW-0694">RNA-binding</keyword>
<keyword id="KW-0699">rRNA-binding</keyword>
<feature type="chain" id="PRO_0000290827" description="Small ribosomal subunit protein uS8">
    <location>
        <begin position="1"/>
        <end position="133"/>
    </location>
</feature>
<dbReference type="EMBL" id="CP000359">
    <property type="protein sequence ID" value="ABF46148.1"/>
    <property type="molecule type" value="Genomic_DNA"/>
</dbReference>
<dbReference type="RefSeq" id="WP_011530978.1">
    <property type="nucleotide sequence ID" value="NC_008025.1"/>
</dbReference>
<dbReference type="SMR" id="Q1IX86"/>
<dbReference type="STRING" id="319795.Dgeo_1853"/>
<dbReference type="KEGG" id="dge:Dgeo_1853"/>
<dbReference type="eggNOG" id="COG0096">
    <property type="taxonomic scope" value="Bacteria"/>
</dbReference>
<dbReference type="HOGENOM" id="CLU_098428_0_2_0"/>
<dbReference type="Proteomes" id="UP000002431">
    <property type="component" value="Chromosome"/>
</dbReference>
<dbReference type="GO" id="GO:1990904">
    <property type="term" value="C:ribonucleoprotein complex"/>
    <property type="evidence" value="ECO:0007669"/>
    <property type="project" value="UniProtKB-KW"/>
</dbReference>
<dbReference type="GO" id="GO:0005840">
    <property type="term" value="C:ribosome"/>
    <property type="evidence" value="ECO:0007669"/>
    <property type="project" value="UniProtKB-KW"/>
</dbReference>
<dbReference type="GO" id="GO:0019843">
    <property type="term" value="F:rRNA binding"/>
    <property type="evidence" value="ECO:0007669"/>
    <property type="project" value="UniProtKB-UniRule"/>
</dbReference>
<dbReference type="GO" id="GO:0003735">
    <property type="term" value="F:structural constituent of ribosome"/>
    <property type="evidence" value="ECO:0007669"/>
    <property type="project" value="InterPro"/>
</dbReference>
<dbReference type="GO" id="GO:0006412">
    <property type="term" value="P:translation"/>
    <property type="evidence" value="ECO:0007669"/>
    <property type="project" value="UniProtKB-UniRule"/>
</dbReference>
<dbReference type="FunFam" id="3.30.1370.30:FF:000002">
    <property type="entry name" value="30S ribosomal protein S8"/>
    <property type="match status" value="1"/>
</dbReference>
<dbReference type="FunFam" id="3.30.1490.10:FF:000001">
    <property type="entry name" value="30S ribosomal protein S8"/>
    <property type="match status" value="1"/>
</dbReference>
<dbReference type="Gene3D" id="3.30.1370.30">
    <property type="match status" value="1"/>
</dbReference>
<dbReference type="Gene3D" id="3.30.1490.10">
    <property type="match status" value="1"/>
</dbReference>
<dbReference type="HAMAP" id="MF_01302_B">
    <property type="entry name" value="Ribosomal_uS8_B"/>
    <property type="match status" value="1"/>
</dbReference>
<dbReference type="InterPro" id="IPR000630">
    <property type="entry name" value="Ribosomal_uS8"/>
</dbReference>
<dbReference type="InterPro" id="IPR047863">
    <property type="entry name" value="Ribosomal_uS8_CS"/>
</dbReference>
<dbReference type="InterPro" id="IPR035987">
    <property type="entry name" value="Ribosomal_uS8_sf"/>
</dbReference>
<dbReference type="NCBIfam" id="NF001109">
    <property type="entry name" value="PRK00136.1"/>
    <property type="match status" value="1"/>
</dbReference>
<dbReference type="PANTHER" id="PTHR11758">
    <property type="entry name" value="40S RIBOSOMAL PROTEIN S15A"/>
    <property type="match status" value="1"/>
</dbReference>
<dbReference type="Pfam" id="PF00410">
    <property type="entry name" value="Ribosomal_S8"/>
    <property type="match status" value="1"/>
</dbReference>
<dbReference type="SUPFAM" id="SSF56047">
    <property type="entry name" value="Ribosomal protein S8"/>
    <property type="match status" value="1"/>
</dbReference>
<dbReference type="PROSITE" id="PS00053">
    <property type="entry name" value="RIBOSOMAL_S8"/>
    <property type="match status" value="1"/>
</dbReference>
<protein>
    <recommendedName>
        <fullName evidence="1">Small ribosomal subunit protein uS8</fullName>
    </recommendedName>
    <alternativeName>
        <fullName evidence="2">30S ribosomal protein S8</fullName>
    </alternativeName>
</protein>
<name>RS8_DEIGD</name>
<gene>
    <name evidence="1" type="primary">rpsH</name>
    <name type="ordered locus">Dgeo_1853</name>
</gene>
<comment type="function">
    <text evidence="1">One of the primary rRNA binding proteins, it binds directly to 16S rRNA central domain where it helps coordinate assembly of the platform of the 30S subunit.</text>
</comment>
<comment type="subunit">
    <text evidence="1">Part of the 30S ribosomal subunit. Contacts proteins S5 and S12.</text>
</comment>
<comment type="similarity">
    <text evidence="1">Belongs to the universal ribosomal protein uS8 family.</text>
</comment>
<evidence type="ECO:0000255" key="1">
    <source>
        <dbReference type="HAMAP-Rule" id="MF_01302"/>
    </source>
</evidence>
<evidence type="ECO:0000305" key="2"/>
<organism>
    <name type="scientific">Deinococcus geothermalis (strain DSM 11300 / CIP 105573 / AG-3a)</name>
    <dbReference type="NCBI Taxonomy" id="319795"/>
    <lineage>
        <taxon>Bacteria</taxon>
        <taxon>Thermotogati</taxon>
        <taxon>Deinococcota</taxon>
        <taxon>Deinococci</taxon>
        <taxon>Deinococcales</taxon>
        <taxon>Deinococcaceae</taxon>
        <taxon>Deinococcus</taxon>
    </lineage>
</organism>
<proteinExistence type="inferred from homology"/>
<reference key="1">
    <citation type="submission" date="2006-04" db="EMBL/GenBank/DDBJ databases">
        <title>Complete sequence of chromosome of Deinococcus geothermalis DSM 11300.</title>
        <authorList>
            <person name="Copeland A."/>
            <person name="Lucas S."/>
            <person name="Lapidus A."/>
            <person name="Barry K."/>
            <person name="Detter J.C."/>
            <person name="Glavina del Rio T."/>
            <person name="Hammon N."/>
            <person name="Israni S."/>
            <person name="Dalin E."/>
            <person name="Tice H."/>
            <person name="Pitluck S."/>
            <person name="Brettin T."/>
            <person name="Bruce D."/>
            <person name="Han C."/>
            <person name="Tapia R."/>
            <person name="Saunders E."/>
            <person name="Gilna P."/>
            <person name="Schmutz J."/>
            <person name="Larimer F."/>
            <person name="Land M."/>
            <person name="Hauser L."/>
            <person name="Kyrpides N."/>
            <person name="Kim E."/>
            <person name="Daly M.J."/>
            <person name="Fredrickson J.K."/>
            <person name="Makarova K.S."/>
            <person name="Gaidamakova E.K."/>
            <person name="Zhai M."/>
            <person name="Richardson P."/>
        </authorList>
    </citation>
    <scope>NUCLEOTIDE SEQUENCE [LARGE SCALE GENOMIC DNA]</scope>
    <source>
        <strain>DSM 11300 / CIP 105573 / AG-3a</strain>
    </source>
</reference>
<accession>Q1IX86</accession>
<sequence length="133" mass="14998">MLSDPIADMLTRIRNATRAYKESVDIPASKFKEELAKLLVREGYVAGVERLRPEGQKFDVLRITLKYGQKREQVIKHIERVSRPGRRAYVSAENLPRVQRGLGLAVVSTSKGLLPDREARKQGVGGEVVCILW</sequence>